<accession>P14231</accession>
<sequence>MVIQKEKKSCGQVVEEWKEFVWNPRTHQFMGRTGTSWAFILLFYLVFYGFLTAMFSLTMWVMLQTVSDHTPKYQDRLATPGLMIRPKTENLDVIVNISDTESWGQHVQKLNKFLEPYNDSIQAQKNDVCRPGRYYEQPDNGVLNYPKRACQFNRTQLGDCSGIGDPTHYGYSTGQPCVFIKMNRVINFYAGANQSMNVTCVGKRDEDAENLGHFVMFPANGSIDLMYFPYYGKKFHVNYTQPLVAVKFLNVTPNVEVNVECRINAANIATDDERDKFAGRVAFKLRINKT</sequence>
<keyword id="KW-0130">Cell adhesion</keyword>
<keyword id="KW-1003">Cell membrane</keyword>
<keyword id="KW-0903">Direct protein sequencing</keyword>
<keyword id="KW-1015">Disulfide bond</keyword>
<keyword id="KW-0325">Glycoprotein</keyword>
<keyword id="KW-0406">Ion transport</keyword>
<keyword id="KW-0472">Membrane</keyword>
<keyword id="KW-0630">Potassium</keyword>
<keyword id="KW-0633">Potassium transport</keyword>
<keyword id="KW-1185">Reference proteome</keyword>
<keyword id="KW-0735">Signal-anchor</keyword>
<keyword id="KW-0915">Sodium</keyword>
<keyword id="KW-0739">Sodium transport</keyword>
<keyword id="KW-0740">Sodium/potassium transport</keyword>
<keyword id="KW-0812">Transmembrane</keyword>
<keyword id="KW-1133">Transmembrane helix</keyword>
<keyword id="KW-0813">Transport</keyword>
<reference key="1">
    <citation type="journal article" date="1990" name="J. Cell Biol.">
        <title>The adhesion molecule on glia (AMOG) is a homologue of the beta subunit of the Na,K-ATPase.</title>
        <authorList>
            <person name="Gloor S.M."/>
            <person name="Antonicek H."/>
            <person name="Sweadner K."/>
            <person name="Pagliusi S."/>
            <person name="Frank R."/>
            <person name="Moos M."/>
            <person name="Schachner M."/>
        </authorList>
    </citation>
    <scope>NUCLEOTIDE SEQUENCE [MRNA]</scope>
    <scope>FUNCTION IN ADHESION</scope>
    <source>
        <strain>C57BL/6J</strain>
        <tissue>Brain</tissue>
    </source>
</reference>
<reference key="2">
    <citation type="journal article" date="1990" name="Nucleic Acids Res.">
        <title>Genomic structure of the adhesion molecule on glia (AMOG, Na/K-ATPase beta 2 subunit).</title>
        <authorList>
            <person name="Magyar J.P."/>
            <person name="Schachner M."/>
        </authorList>
    </citation>
    <scope>NUCLEOTIDE SEQUENCE [GENOMIC DNA]</scope>
    <source>
        <strain>C57BL/6J</strain>
        <tissue>Brain</tissue>
    </source>
</reference>
<reference key="3">
    <citation type="submission" date="1992-05" db="EMBL/GenBank/DDBJ databases">
        <authorList>
            <person name="Magyar J.P."/>
        </authorList>
    </citation>
    <scope>SEQUENCE REVISION</scope>
</reference>
<reference key="4">
    <citation type="journal article" date="1991" name="Genomics">
        <title>Evolution of the Na,K- and H,K-ATPase beta subunit gene family: structure of the murine Na,K-ATPase beta 2 subunit gene.</title>
        <authorList>
            <person name="Shyjan A.W."/>
            <person name="Canfield V.A."/>
            <person name="Levenson R."/>
        </authorList>
    </citation>
    <scope>NUCLEOTIDE SEQUENCE [GENOMIC DNA]</scope>
</reference>
<reference key="5">
    <citation type="journal article" date="2004" name="Genome Res.">
        <title>The status, quality, and expansion of the NIH full-length cDNA project: the Mammalian Gene Collection (MGC).</title>
        <authorList>
            <consortium name="The MGC Project Team"/>
        </authorList>
    </citation>
    <scope>NUCLEOTIDE SEQUENCE [LARGE SCALE MRNA]</scope>
    <source>
        <tissue>Retina</tissue>
    </source>
</reference>
<reference key="6">
    <citation type="submission" date="2007-04" db="UniProtKB">
        <authorList>
            <person name="Lubec G."/>
            <person name="Kang S.U."/>
        </authorList>
    </citation>
    <scope>PROTEIN SEQUENCE OF 9-25; 155-181 AND 248-274</scope>
    <scope>IDENTIFICATION BY MASS SPECTROMETRY</scope>
    <source>
        <strain>C57BL/6J</strain>
        <tissue>Brain</tissue>
    </source>
</reference>
<reference key="7">
    <citation type="journal article" date="1993" name="J. Biol. Chem.">
        <title>Functional characterization of beta isoforms of murine Na,K-ATPase. The adhesion molecule on glia (AMOG/beta 2), but not beta 1, promotes neurite outgrowth.</title>
        <authorList>
            <person name="Muller-Husmann G."/>
            <person name="Gloor S."/>
            <person name="Schachner M."/>
        </authorList>
    </citation>
    <scope>FUNCTION IN ADHESION</scope>
</reference>
<reference key="8">
    <citation type="journal article" date="2003" name="J. Neurochem.">
        <title>The immunoglobulin-superfamily molecule basigin is a binding protein for oligomannosidic carbohydrates: an anti-idiotypic approach.</title>
        <authorList>
            <person name="Heller M."/>
            <person name="von der Ohe M."/>
            <person name="Kleene R."/>
            <person name="Mohajeri M.H."/>
            <person name="Schachner M."/>
        </authorList>
    </citation>
    <scope>INTERACTION WITH BSG</scope>
</reference>
<reference key="9">
    <citation type="journal article" date="2009" name="Nat. Biotechnol.">
        <title>Mass-spectrometric identification and relative quantification of N-linked cell surface glycoproteins.</title>
        <authorList>
            <person name="Wollscheid B."/>
            <person name="Bausch-Fluck D."/>
            <person name="Henderson C."/>
            <person name="O'Brien R."/>
            <person name="Bibel M."/>
            <person name="Schiess R."/>
            <person name="Aebersold R."/>
            <person name="Watts J.D."/>
        </authorList>
    </citation>
    <scope>GLYCOSYLATION [LARGE SCALE ANALYSIS] AT ASN-118 AND ASN-238</scope>
</reference>
<reference key="10">
    <citation type="journal article" date="2010" name="Cell">
        <title>A tissue-specific atlas of mouse protein phosphorylation and expression.</title>
        <authorList>
            <person name="Huttlin E.L."/>
            <person name="Jedrychowski M.P."/>
            <person name="Elias J.E."/>
            <person name="Goswami T."/>
            <person name="Rad R."/>
            <person name="Beausoleil S.A."/>
            <person name="Villen J."/>
            <person name="Haas W."/>
            <person name="Sowa M.E."/>
            <person name="Gygi S.P."/>
        </authorList>
    </citation>
    <scope>IDENTIFICATION BY MASS SPECTROMETRY [LARGE SCALE ANALYSIS]</scope>
    <source>
        <tissue>Brain</tissue>
        <tissue>Brown adipose tissue</tissue>
        <tissue>Spleen</tissue>
    </source>
</reference>
<protein>
    <recommendedName>
        <fullName>Sodium/potassium-transporting ATPase subunit beta-2</fullName>
    </recommendedName>
    <alternativeName>
        <fullName>Adhesion molecule in glia</fullName>
        <shortName>AMOG</shortName>
    </alternativeName>
    <alternativeName>
        <fullName>Sodium/potassium-dependent ATPase subunit beta-2</fullName>
    </alternativeName>
</protein>
<organism>
    <name type="scientific">Mus musculus</name>
    <name type="common">Mouse</name>
    <dbReference type="NCBI Taxonomy" id="10090"/>
    <lineage>
        <taxon>Eukaryota</taxon>
        <taxon>Metazoa</taxon>
        <taxon>Chordata</taxon>
        <taxon>Craniata</taxon>
        <taxon>Vertebrata</taxon>
        <taxon>Euteleostomi</taxon>
        <taxon>Mammalia</taxon>
        <taxon>Eutheria</taxon>
        <taxon>Euarchontoglires</taxon>
        <taxon>Glires</taxon>
        <taxon>Rodentia</taxon>
        <taxon>Myomorpha</taxon>
        <taxon>Muroidea</taxon>
        <taxon>Muridae</taxon>
        <taxon>Murinae</taxon>
        <taxon>Mus</taxon>
        <taxon>Mus</taxon>
    </lineage>
</organism>
<feature type="chain" id="PRO_0000219105" description="Sodium/potassium-transporting ATPase subunit beta-2">
    <location>
        <begin position="1"/>
        <end position="290"/>
    </location>
</feature>
<feature type="topological domain" description="Cytoplasmic" evidence="2">
    <location>
        <begin position="1"/>
        <end position="39"/>
    </location>
</feature>
<feature type="transmembrane region" description="Helical; Signal-anchor for type II membrane protein" evidence="2">
    <location>
        <begin position="40"/>
        <end position="67"/>
    </location>
</feature>
<feature type="topological domain" description="Extracellular" evidence="2">
    <location>
        <begin position="68"/>
        <end position="290"/>
    </location>
</feature>
<feature type="region of interest" description="immunoglobulin-like" evidence="1">
    <location>
        <begin position="193"/>
        <end position="290"/>
    </location>
</feature>
<feature type="glycosylation site" description="N-linked (GlcNAc...) asparagine" evidence="2">
    <location>
        <position position="96"/>
    </location>
</feature>
<feature type="glycosylation site" description="N-linked (GlcNAc...) asparagine" evidence="4">
    <location>
        <position position="118"/>
    </location>
</feature>
<feature type="glycosylation site" description="N-linked (GlcNAc...) asparagine" evidence="2">
    <location>
        <position position="153"/>
    </location>
</feature>
<feature type="glycosylation site" description="N-linked (GlcNAc...) asparagine" evidence="2">
    <location>
        <position position="193"/>
    </location>
</feature>
<feature type="glycosylation site" description="N-linked (GlcNAc...) asparagine" evidence="2">
    <location>
        <position position="197"/>
    </location>
</feature>
<feature type="glycosylation site" description="N-linked (GlcNAc...) asparagine" evidence="2">
    <location>
        <position position="220"/>
    </location>
</feature>
<feature type="glycosylation site" description="N-linked (GlcNAc...) asparagine" evidence="4">
    <location>
        <position position="238"/>
    </location>
</feature>
<feature type="disulfide bond" evidence="1">
    <location>
        <begin position="129"/>
        <end position="150"/>
    </location>
</feature>
<feature type="disulfide bond" evidence="1">
    <location>
        <begin position="160"/>
        <end position="177"/>
    </location>
</feature>
<feature type="disulfide bond" evidence="1">
    <location>
        <begin position="200"/>
        <end position="261"/>
    </location>
</feature>
<name>AT1B2_MOUSE</name>
<comment type="function">
    <text>This is the non-catalytic component of the active enzyme, which catalyzes the hydrolysis of ATP coupled with the exchange of Na(+) and K(+) ions across the plasma membrane. The exact function of the beta-2 subunit is not known.</text>
</comment>
<comment type="function">
    <text>Mediates cell adhesion of neurons and astrocytes, and promotes neurite outgrowth.</text>
</comment>
<comment type="subunit">
    <text evidence="3 5">The sodium/potassium-transporting ATPase is composed of a catalytic alpha subunit, an auxiliary non-catalytic beta subunit and an additional regulatory subunit. Interacts with isoform 2 of BSG (PubMed:12558975).</text>
</comment>
<comment type="subcellular location">
    <subcellularLocation>
        <location>Cell membrane</location>
        <topology>Single-pass type II membrane protein</topology>
    </subcellularLocation>
</comment>
<comment type="domain">
    <text evidence="1">The C-terminal lobe folds into an immunoglobulin-like domain and mediates cell adhesion properties.</text>
</comment>
<comment type="similarity">
    <text evidence="5">Belongs to the X(+)/potassium ATPases subunit beta family.</text>
</comment>
<dbReference type="EMBL" id="X16645">
    <property type="protein sequence ID" value="CAA34638.1"/>
    <property type="molecule type" value="mRNA"/>
</dbReference>
<dbReference type="EMBL" id="X56007">
    <property type="protein sequence ID" value="CAA39482.1"/>
    <property type="molecule type" value="Genomic_DNA"/>
</dbReference>
<dbReference type="EMBL" id="M60897">
    <property type="status" value="NOT_ANNOTATED_CDS"/>
    <property type="molecule type" value="Genomic_DNA"/>
</dbReference>
<dbReference type="EMBL" id="BC042467">
    <property type="protein sequence ID" value="AAH42467.1"/>
    <property type="molecule type" value="mRNA"/>
</dbReference>
<dbReference type="EMBL" id="BC058763">
    <property type="protein sequence ID" value="AAH58763.1"/>
    <property type="molecule type" value="mRNA"/>
</dbReference>
<dbReference type="CCDS" id="CCDS24898.1"/>
<dbReference type="PIR" id="A34057">
    <property type="entry name" value="A34057"/>
</dbReference>
<dbReference type="PIR" id="S14235">
    <property type="entry name" value="S14235"/>
</dbReference>
<dbReference type="RefSeq" id="NP_038201.1">
    <property type="nucleotide sequence ID" value="NM_013415.6"/>
</dbReference>
<dbReference type="SMR" id="P14231"/>
<dbReference type="BioGRID" id="198245">
    <property type="interactions" value="11"/>
</dbReference>
<dbReference type="FunCoup" id="P14231">
    <property type="interactions" value="1002"/>
</dbReference>
<dbReference type="IntAct" id="P14231">
    <property type="interactions" value="2"/>
</dbReference>
<dbReference type="MINT" id="P14231"/>
<dbReference type="STRING" id="10090.ENSMUSP00000047353"/>
<dbReference type="GlyConnect" id="2728">
    <property type="glycosylation" value="33 N-Linked glycans (8 sites)"/>
</dbReference>
<dbReference type="GlyCosmos" id="P14231">
    <property type="glycosylation" value="8 sites, 32 glycans"/>
</dbReference>
<dbReference type="GlyGen" id="P14231">
    <property type="glycosylation" value="11 sites, 36 N-linked glycans (9 sites), 1 O-linked glycan (2 sites)"/>
</dbReference>
<dbReference type="iPTMnet" id="P14231"/>
<dbReference type="PhosphoSitePlus" id="P14231"/>
<dbReference type="SwissPalm" id="P14231"/>
<dbReference type="jPOST" id="P14231"/>
<dbReference type="PaxDb" id="10090-ENSMUSP00000047353"/>
<dbReference type="PeptideAtlas" id="P14231"/>
<dbReference type="ProteomicsDB" id="277265"/>
<dbReference type="Antibodypedia" id="2415">
    <property type="antibodies" value="240 antibodies from 32 providers"/>
</dbReference>
<dbReference type="DNASU" id="11932"/>
<dbReference type="Ensembl" id="ENSMUST00000047889.13">
    <property type="protein sequence ID" value="ENSMUSP00000047353.7"/>
    <property type="gene ID" value="ENSMUSG00000041329.14"/>
</dbReference>
<dbReference type="GeneID" id="11932"/>
<dbReference type="KEGG" id="mmu:11932"/>
<dbReference type="UCSC" id="uc007jqo.1">
    <property type="organism name" value="mouse"/>
</dbReference>
<dbReference type="AGR" id="MGI:88109"/>
<dbReference type="CTD" id="482"/>
<dbReference type="MGI" id="MGI:88109">
    <property type="gene designation" value="Atp1b2"/>
</dbReference>
<dbReference type="VEuPathDB" id="HostDB:ENSMUSG00000041329"/>
<dbReference type="eggNOG" id="KOG3927">
    <property type="taxonomic scope" value="Eukaryota"/>
</dbReference>
<dbReference type="GeneTree" id="ENSGT01030000234579"/>
<dbReference type="HOGENOM" id="CLU_057702_1_1_1"/>
<dbReference type="InParanoid" id="P14231"/>
<dbReference type="OMA" id="IGDPTYY"/>
<dbReference type="OrthoDB" id="5912413at2759"/>
<dbReference type="PhylomeDB" id="P14231"/>
<dbReference type="TreeFam" id="TF314618"/>
<dbReference type="Reactome" id="R-MMU-210991">
    <property type="pathway name" value="Basigin interactions"/>
</dbReference>
<dbReference type="Reactome" id="R-MMU-5578775">
    <property type="pathway name" value="Ion homeostasis"/>
</dbReference>
<dbReference type="Reactome" id="R-MMU-936837">
    <property type="pathway name" value="Ion transport by P-type ATPases"/>
</dbReference>
<dbReference type="BioGRID-ORCS" id="11932">
    <property type="hits" value="4 hits in 77 CRISPR screens"/>
</dbReference>
<dbReference type="CD-CODE" id="CE726F99">
    <property type="entry name" value="Postsynaptic density"/>
</dbReference>
<dbReference type="ChiTaRS" id="Atp1b2">
    <property type="organism name" value="mouse"/>
</dbReference>
<dbReference type="PRO" id="PR:P14231"/>
<dbReference type="Proteomes" id="UP000000589">
    <property type="component" value="Chromosome 11"/>
</dbReference>
<dbReference type="RNAct" id="P14231">
    <property type="molecule type" value="protein"/>
</dbReference>
<dbReference type="Bgee" id="ENSMUSG00000041329">
    <property type="expression patterns" value="Expressed in retinal neural layer and 197 other cell types or tissues"/>
</dbReference>
<dbReference type="ExpressionAtlas" id="P14231">
    <property type="expression patterns" value="baseline and differential"/>
</dbReference>
<dbReference type="GO" id="GO:0016324">
    <property type="term" value="C:apical plasma membrane"/>
    <property type="evidence" value="ECO:0000314"/>
    <property type="project" value="MGI"/>
</dbReference>
<dbReference type="GO" id="GO:0097450">
    <property type="term" value="C:astrocyte end-foot"/>
    <property type="evidence" value="ECO:0000314"/>
    <property type="project" value="ARUK-UCL"/>
</dbReference>
<dbReference type="GO" id="GO:0097449">
    <property type="term" value="C:astrocyte projection"/>
    <property type="evidence" value="ECO:0000314"/>
    <property type="project" value="ARUK-UCL"/>
</dbReference>
<dbReference type="GO" id="GO:0044298">
    <property type="term" value="C:cell body membrane"/>
    <property type="evidence" value="ECO:0000314"/>
    <property type="project" value="ARUK-UCL"/>
</dbReference>
<dbReference type="GO" id="GO:0031253">
    <property type="term" value="C:cell projection membrane"/>
    <property type="evidence" value="ECO:0000314"/>
    <property type="project" value="ARUK-UCL"/>
</dbReference>
<dbReference type="GO" id="GO:0005737">
    <property type="term" value="C:cytoplasm"/>
    <property type="evidence" value="ECO:0000314"/>
    <property type="project" value="MGI"/>
</dbReference>
<dbReference type="GO" id="GO:0009897">
    <property type="term" value="C:external side of plasma membrane"/>
    <property type="evidence" value="ECO:0000314"/>
    <property type="project" value="ARUK-UCL"/>
</dbReference>
<dbReference type="GO" id="GO:0016328">
    <property type="term" value="C:lateral plasma membrane"/>
    <property type="evidence" value="ECO:0007669"/>
    <property type="project" value="Ensembl"/>
</dbReference>
<dbReference type="GO" id="GO:0098984">
    <property type="term" value="C:neuron to neuron synapse"/>
    <property type="evidence" value="ECO:0000314"/>
    <property type="project" value="ARUK-UCL"/>
</dbReference>
<dbReference type="GO" id="GO:0001917">
    <property type="term" value="C:photoreceptor inner segment"/>
    <property type="evidence" value="ECO:0000314"/>
    <property type="project" value="ARUK-UCL"/>
</dbReference>
<dbReference type="GO" id="GO:0005886">
    <property type="term" value="C:plasma membrane"/>
    <property type="evidence" value="ECO:0000315"/>
    <property type="project" value="ARUK-UCL"/>
</dbReference>
<dbReference type="GO" id="GO:0005890">
    <property type="term" value="C:sodium:potassium-exchanging ATPase complex"/>
    <property type="evidence" value="ECO:0007669"/>
    <property type="project" value="Ensembl"/>
</dbReference>
<dbReference type="GO" id="GO:0001671">
    <property type="term" value="F:ATPase activator activity"/>
    <property type="evidence" value="ECO:0007669"/>
    <property type="project" value="Ensembl"/>
</dbReference>
<dbReference type="GO" id="GO:0051117">
    <property type="term" value="F:ATPase binding"/>
    <property type="evidence" value="ECO:0007669"/>
    <property type="project" value="Ensembl"/>
</dbReference>
<dbReference type="GO" id="GO:0030674">
    <property type="term" value="F:protein-macromolecule adaptor activity"/>
    <property type="evidence" value="ECO:0007669"/>
    <property type="project" value="Ensembl"/>
</dbReference>
<dbReference type="GO" id="GO:0141109">
    <property type="term" value="F:transporter activator activity"/>
    <property type="evidence" value="ECO:0007669"/>
    <property type="project" value="Ensembl"/>
</dbReference>
<dbReference type="GO" id="GO:0031589">
    <property type="term" value="P:cell-substrate adhesion"/>
    <property type="evidence" value="ECO:0000314"/>
    <property type="project" value="ARUK-UCL"/>
</dbReference>
<dbReference type="GO" id="GO:0030007">
    <property type="term" value="P:intracellular potassium ion homeostasis"/>
    <property type="evidence" value="ECO:0007669"/>
    <property type="project" value="Ensembl"/>
</dbReference>
<dbReference type="GO" id="GO:0006883">
    <property type="term" value="P:intracellular sodium ion homeostasis"/>
    <property type="evidence" value="ECO:0007669"/>
    <property type="project" value="Ensembl"/>
</dbReference>
<dbReference type="GO" id="GO:0021670">
    <property type="term" value="P:lateral ventricle development"/>
    <property type="evidence" value="ECO:0000315"/>
    <property type="project" value="ARUK-UCL"/>
</dbReference>
<dbReference type="GO" id="GO:0086009">
    <property type="term" value="P:membrane repolarization"/>
    <property type="evidence" value="ECO:0007669"/>
    <property type="project" value="Ensembl"/>
</dbReference>
<dbReference type="GO" id="GO:0061744">
    <property type="term" value="P:motor behavior"/>
    <property type="evidence" value="ECO:0000315"/>
    <property type="project" value="ARUK-UCL"/>
</dbReference>
<dbReference type="GO" id="GO:1903976">
    <property type="term" value="P:negative regulation of glial cell migration"/>
    <property type="evidence" value="ECO:0000314"/>
    <property type="project" value="ARUK-UCL"/>
</dbReference>
<dbReference type="GO" id="GO:0021944">
    <property type="term" value="P:neuronal-glial interaction involved in hindbrain glial-mediated radial cell migration"/>
    <property type="evidence" value="ECO:0000315"/>
    <property type="project" value="ARUK-UCL"/>
</dbReference>
<dbReference type="GO" id="GO:0045494">
    <property type="term" value="P:photoreceptor cell maintenance"/>
    <property type="evidence" value="ECO:0000315"/>
    <property type="project" value="ARUK-UCL"/>
</dbReference>
<dbReference type="GO" id="GO:0120036">
    <property type="term" value="P:plasma membrane bounded cell projection organization"/>
    <property type="evidence" value="ECO:0000315"/>
    <property type="project" value="ARUK-UCL"/>
</dbReference>
<dbReference type="GO" id="GO:0010976">
    <property type="term" value="P:positive regulation of neuron projection development"/>
    <property type="evidence" value="ECO:0000314"/>
    <property type="project" value="ARUK-UCL"/>
</dbReference>
<dbReference type="GO" id="GO:1903288">
    <property type="term" value="P:positive regulation of potassium ion import across plasma membrane"/>
    <property type="evidence" value="ECO:0007669"/>
    <property type="project" value="Ensembl"/>
</dbReference>
<dbReference type="GO" id="GO:1903278">
    <property type="term" value="P:positive regulation of sodium ion export across plasma membrane"/>
    <property type="evidence" value="ECO:0007669"/>
    <property type="project" value="Ensembl"/>
</dbReference>
<dbReference type="GO" id="GO:1990573">
    <property type="term" value="P:potassium ion import across plasma membrane"/>
    <property type="evidence" value="ECO:0007669"/>
    <property type="project" value="Ensembl"/>
</dbReference>
<dbReference type="GO" id="GO:0050821">
    <property type="term" value="P:protein stabilization"/>
    <property type="evidence" value="ECO:0007669"/>
    <property type="project" value="Ensembl"/>
</dbReference>
<dbReference type="GO" id="GO:0001895">
    <property type="term" value="P:retina homeostasis"/>
    <property type="evidence" value="ECO:0000315"/>
    <property type="project" value="ARUK-UCL"/>
</dbReference>
<dbReference type="GO" id="GO:0036376">
    <property type="term" value="P:sodium ion export across plasma membrane"/>
    <property type="evidence" value="ECO:0007669"/>
    <property type="project" value="Ensembl"/>
</dbReference>
<dbReference type="GO" id="GO:0021678">
    <property type="term" value="P:third ventricle development"/>
    <property type="evidence" value="ECO:0000315"/>
    <property type="project" value="ARUK-UCL"/>
</dbReference>
<dbReference type="FunFam" id="1.20.5.170:FF:000068">
    <property type="entry name" value="Sodium/potassium-transporting ATPase subunit beta"/>
    <property type="match status" value="1"/>
</dbReference>
<dbReference type="FunFam" id="2.60.40.1660:FF:000003">
    <property type="entry name" value="Sodium/potassium-transporting ATPase subunit beta"/>
    <property type="match status" value="1"/>
</dbReference>
<dbReference type="Gene3D" id="1.20.5.170">
    <property type="match status" value="1"/>
</dbReference>
<dbReference type="Gene3D" id="2.60.40.1660">
    <property type="entry name" value="Na, k-atpase alpha subunit"/>
    <property type="match status" value="1"/>
</dbReference>
<dbReference type="InterPro" id="IPR000402">
    <property type="entry name" value="Na/K_ATPase_sub_beta"/>
</dbReference>
<dbReference type="InterPro" id="IPR038702">
    <property type="entry name" value="Na/K_ATPase_sub_beta_sf"/>
</dbReference>
<dbReference type="NCBIfam" id="TIGR01107">
    <property type="entry name" value="Na_K_ATPase_bet"/>
    <property type="match status" value="1"/>
</dbReference>
<dbReference type="PANTHER" id="PTHR11523">
    <property type="entry name" value="SODIUM/POTASSIUM-DEPENDENT ATPASE BETA SUBUNIT"/>
    <property type="match status" value="1"/>
</dbReference>
<dbReference type="PANTHER" id="PTHR11523:SF26">
    <property type="entry name" value="SODIUM_POTASSIUM-TRANSPORTING ATPASE SUBUNIT BETA-2"/>
    <property type="match status" value="1"/>
</dbReference>
<dbReference type="Pfam" id="PF00287">
    <property type="entry name" value="Na_K-ATPase"/>
    <property type="match status" value="1"/>
</dbReference>
<dbReference type="PROSITE" id="PS00390">
    <property type="entry name" value="ATPASE_NA_K_BETA_1"/>
    <property type="match status" value="1"/>
</dbReference>
<dbReference type="PROSITE" id="PS00391">
    <property type="entry name" value="ATPASE_NA_K_BETA_2"/>
    <property type="match status" value="1"/>
</dbReference>
<gene>
    <name type="primary">Atp1b2</name>
</gene>
<evidence type="ECO:0000250" key="1"/>
<evidence type="ECO:0000255" key="2"/>
<evidence type="ECO:0000269" key="3">
    <source>
    </source>
</evidence>
<evidence type="ECO:0000269" key="4">
    <source>
    </source>
</evidence>
<evidence type="ECO:0000305" key="5"/>
<proteinExistence type="evidence at protein level"/>